<comment type="function">
    <text evidence="1">Produces ATP from ADP in the presence of a proton gradient across the membrane.</text>
</comment>
<comment type="subunit">
    <text evidence="1">F-type ATPases have 2 components, CF(1) - the catalytic core - and CF(0) - the membrane proton channel. CF(1) has five subunits: alpha(3), beta(3), gamma(1), delta(1), epsilon(1). CF(0) has three main subunits: a, b and c.</text>
</comment>
<comment type="subcellular location">
    <subcellularLocation>
        <location evidence="1">Cell membrane</location>
        <topology evidence="1">Peripheral membrane protein</topology>
    </subcellularLocation>
</comment>
<comment type="similarity">
    <text evidence="1">Belongs to the ATPase epsilon chain family.</text>
</comment>
<dbReference type="EMBL" id="CP000412">
    <property type="protein sequence ID" value="ABJ58270.1"/>
    <property type="molecule type" value="Genomic_DNA"/>
</dbReference>
<dbReference type="RefSeq" id="WP_003623502.1">
    <property type="nucleotide sequence ID" value="NC_008529.1"/>
</dbReference>
<dbReference type="SMR" id="Q04BA2"/>
<dbReference type="KEGG" id="lbu:LBUL_0644"/>
<dbReference type="HOGENOM" id="CLU_084338_1_0_9"/>
<dbReference type="BioCyc" id="LDEL321956:LBUL_RS03065-MONOMER"/>
<dbReference type="GO" id="GO:0005886">
    <property type="term" value="C:plasma membrane"/>
    <property type="evidence" value="ECO:0007669"/>
    <property type="project" value="UniProtKB-SubCell"/>
</dbReference>
<dbReference type="GO" id="GO:0045259">
    <property type="term" value="C:proton-transporting ATP synthase complex"/>
    <property type="evidence" value="ECO:0007669"/>
    <property type="project" value="UniProtKB-KW"/>
</dbReference>
<dbReference type="GO" id="GO:0005524">
    <property type="term" value="F:ATP binding"/>
    <property type="evidence" value="ECO:0007669"/>
    <property type="project" value="UniProtKB-UniRule"/>
</dbReference>
<dbReference type="GO" id="GO:0046933">
    <property type="term" value="F:proton-transporting ATP synthase activity, rotational mechanism"/>
    <property type="evidence" value="ECO:0007669"/>
    <property type="project" value="UniProtKB-UniRule"/>
</dbReference>
<dbReference type="CDD" id="cd12152">
    <property type="entry name" value="F1-ATPase_delta"/>
    <property type="match status" value="1"/>
</dbReference>
<dbReference type="Gene3D" id="1.20.5.440">
    <property type="entry name" value="ATP synthase delta/epsilon subunit, C-terminal domain"/>
    <property type="match status" value="1"/>
</dbReference>
<dbReference type="Gene3D" id="2.60.15.10">
    <property type="entry name" value="F0F1 ATP synthase delta/epsilon subunit, N-terminal"/>
    <property type="match status" value="1"/>
</dbReference>
<dbReference type="HAMAP" id="MF_00530">
    <property type="entry name" value="ATP_synth_epsil_bac"/>
    <property type="match status" value="1"/>
</dbReference>
<dbReference type="InterPro" id="IPR036794">
    <property type="entry name" value="ATP_F1_dsu/esu_C_sf"/>
</dbReference>
<dbReference type="InterPro" id="IPR001469">
    <property type="entry name" value="ATP_synth_F1_dsu/esu"/>
</dbReference>
<dbReference type="InterPro" id="IPR020546">
    <property type="entry name" value="ATP_synth_F1_dsu/esu_N"/>
</dbReference>
<dbReference type="InterPro" id="IPR020547">
    <property type="entry name" value="ATP_synth_F1_esu_C"/>
</dbReference>
<dbReference type="InterPro" id="IPR036771">
    <property type="entry name" value="ATPsynth_dsu/esu_N"/>
</dbReference>
<dbReference type="NCBIfam" id="TIGR01216">
    <property type="entry name" value="ATP_synt_epsi"/>
    <property type="match status" value="1"/>
</dbReference>
<dbReference type="NCBIfam" id="NF001846">
    <property type="entry name" value="PRK00571.1-3"/>
    <property type="match status" value="1"/>
</dbReference>
<dbReference type="PANTHER" id="PTHR13822">
    <property type="entry name" value="ATP SYNTHASE DELTA/EPSILON CHAIN"/>
    <property type="match status" value="1"/>
</dbReference>
<dbReference type="PANTHER" id="PTHR13822:SF10">
    <property type="entry name" value="ATP SYNTHASE EPSILON CHAIN, CHLOROPLASTIC"/>
    <property type="match status" value="1"/>
</dbReference>
<dbReference type="Pfam" id="PF00401">
    <property type="entry name" value="ATP-synt_DE"/>
    <property type="match status" value="1"/>
</dbReference>
<dbReference type="Pfam" id="PF02823">
    <property type="entry name" value="ATP-synt_DE_N"/>
    <property type="match status" value="1"/>
</dbReference>
<dbReference type="SUPFAM" id="SSF46604">
    <property type="entry name" value="Epsilon subunit of F1F0-ATP synthase C-terminal domain"/>
    <property type="match status" value="1"/>
</dbReference>
<dbReference type="SUPFAM" id="SSF51344">
    <property type="entry name" value="Epsilon subunit of F1F0-ATP synthase N-terminal domain"/>
    <property type="match status" value="1"/>
</dbReference>
<feature type="chain" id="PRO_1000056495" description="ATP synthase epsilon chain">
    <location>
        <begin position="1"/>
        <end position="146"/>
    </location>
</feature>
<name>ATPE_LACDB</name>
<gene>
    <name evidence="1" type="primary">atpC</name>
    <name type="ordered locus">LBUL_0644</name>
</gene>
<keyword id="KW-0066">ATP synthesis</keyword>
<keyword id="KW-1003">Cell membrane</keyword>
<keyword id="KW-0139">CF(1)</keyword>
<keyword id="KW-0375">Hydrogen ion transport</keyword>
<keyword id="KW-0406">Ion transport</keyword>
<keyword id="KW-0472">Membrane</keyword>
<keyword id="KW-0813">Transport</keyword>
<organism>
    <name type="scientific">Lactobacillus delbrueckii subsp. bulgaricus (strain ATCC BAA-365 / Lb-18)</name>
    <dbReference type="NCBI Taxonomy" id="321956"/>
    <lineage>
        <taxon>Bacteria</taxon>
        <taxon>Bacillati</taxon>
        <taxon>Bacillota</taxon>
        <taxon>Bacilli</taxon>
        <taxon>Lactobacillales</taxon>
        <taxon>Lactobacillaceae</taxon>
        <taxon>Lactobacillus</taxon>
    </lineage>
</organism>
<evidence type="ECO:0000255" key="1">
    <source>
        <dbReference type="HAMAP-Rule" id="MF_00530"/>
    </source>
</evidence>
<reference key="1">
    <citation type="journal article" date="2006" name="Proc. Natl. Acad. Sci. U.S.A.">
        <title>Comparative genomics of the lactic acid bacteria.</title>
        <authorList>
            <person name="Makarova K.S."/>
            <person name="Slesarev A."/>
            <person name="Wolf Y.I."/>
            <person name="Sorokin A."/>
            <person name="Mirkin B."/>
            <person name="Koonin E.V."/>
            <person name="Pavlov A."/>
            <person name="Pavlova N."/>
            <person name="Karamychev V."/>
            <person name="Polouchine N."/>
            <person name="Shakhova V."/>
            <person name="Grigoriev I."/>
            <person name="Lou Y."/>
            <person name="Rohksar D."/>
            <person name="Lucas S."/>
            <person name="Huang K."/>
            <person name="Goodstein D.M."/>
            <person name="Hawkins T."/>
            <person name="Plengvidhya V."/>
            <person name="Welker D."/>
            <person name="Hughes J."/>
            <person name="Goh Y."/>
            <person name="Benson A."/>
            <person name="Baldwin K."/>
            <person name="Lee J.-H."/>
            <person name="Diaz-Muniz I."/>
            <person name="Dosti B."/>
            <person name="Smeianov V."/>
            <person name="Wechter W."/>
            <person name="Barabote R."/>
            <person name="Lorca G."/>
            <person name="Altermann E."/>
            <person name="Barrangou R."/>
            <person name="Ganesan B."/>
            <person name="Xie Y."/>
            <person name="Rawsthorne H."/>
            <person name="Tamir D."/>
            <person name="Parker C."/>
            <person name="Breidt F."/>
            <person name="Broadbent J.R."/>
            <person name="Hutkins R."/>
            <person name="O'Sullivan D."/>
            <person name="Steele J."/>
            <person name="Unlu G."/>
            <person name="Saier M.H. Jr."/>
            <person name="Klaenhammer T."/>
            <person name="Richardson P."/>
            <person name="Kozyavkin S."/>
            <person name="Weimer B.C."/>
            <person name="Mills D.A."/>
        </authorList>
    </citation>
    <scope>NUCLEOTIDE SEQUENCE [LARGE SCALE GENOMIC DNA]</scope>
    <source>
        <strain>ATCC BAA-365 / Lb-18</strain>
    </source>
</reference>
<accession>Q04BA2</accession>
<sequence>MAEAEKLFKINIVTPNGLIYSHRGSSVSMRAIDGDRQILYNHLPILTPLTIGEVRVQRGADVDHKVDHIAVSGGIIEFANNVATIIADNAERARNIDLSRAEAAKQRAEAHITEAKEKHDEQLLERAQIALRRAVNRIHVYGALHK</sequence>
<protein>
    <recommendedName>
        <fullName evidence="1">ATP synthase epsilon chain</fullName>
    </recommendedName>
    <alternativeName>
        <fullName evidence="1">ATP synthase F1 sector epsilon subunit</fullName>
    </alternativeName>
    <alternativeName>
        <fullName evidence="1">F-ATPase epsilon subunit</fullName>
    </alternativeName>
</protein>
<proteinExistence type="inferred from homology"/>